<organism>
    <name type="scientific">Paraburkholderia phymatum (strain DSM 17167 / CIP 108236 / LMG 21445 / STM815)</name>
    <name type="common">Burkholderia phymatum</name>
    <dbReference type="NCBI Taxonomy" id="391038"/>
    <lineage>
        <taxon>Bacteria</taxon>
        <taxon>Pseudomonadati</taxon>
        <taxon>Pseudomonadota</taxon>
        <taxon>Betaproteobacteria</taxon>
        <taxon>Burkholderiales</taxon>
        <taxon>Burkholderiaceae</taxon>
        <taxon>Paraburkholderia</taxon>
    </lineage>
</organism>
<comment type="function">
    <text evidence="1">Catalyzes the pyruvoyl-dependent decarboxylation of aspartate to produce beta-alanine.</text>
</comment>
<comment type="catalytic activity">
    <reaction evidence="1">
        <text>L-aspartate + H(+) = beta-alanine + CO2</text>
        <dbReference type="Rhea" id="RHEA:19497"/>
        <dbReference type="ChEBI" id="CHEBI:15378"/>
        <dbReference type="ChEBI" id="CHEBI:16526"/>
        <dbReference type="ChEBI" id="CHEBI:29991"/>
        <dbReference type="ChEBI" id="CHEBI:57966"/>
        <dbReference type="EC" id="4.1.1.11"/>
    </reaction>
</comment>
<comment type="cofactor">
    <cofactor evidence="1">
        <name>pyruvate</name>
        <dbReference type="ChEBI" id="CHEBI:15361"/>
    </cofactor>
    <text evidence="1">Binds 1 pyruvoyl group covalently per subunit.</text>
</comment>
<comment type="pathway">
    <text evidence="1">Cofactor biosynthesis; (R)-pantothenate biosynthesis; beta-alanine from L-aspartate: step 1/1.</text>
</comment>
<comment type="subunit">
    <text evidence="1">Heterooctamer of four alpha and four beta subunits.</text>
</comment>
<comment type="subcellular location">
    <subcellularLocation>
        <location evidence="1">Cytoplasm</location>
    </subcellularLocation>
</comment>
<comment type="PTM">
    <text evidence="1">Is synthesized initially as an inactive proenzyme, which is activated by self-cleavage at a specific serine bond to produce a beta-subunit with a hydroxyl group at its C-terminus and an alpha-subunit with a pyruvoyl group at its N-terminus.</text>
</comment>
<comment type="similarity">
    <text evidence="1">Belongs to the PanD family.</text>
</comment>
<proteinExistence type="inferred from homology"/>
<gene>
    <name evidence="1" type="primary">panD</name>
    <name type="ordered locus">Bphy_2198</name>
</gene>
<protein>
    <recommendedName>
        <fullName evidence="1">Aspartate 1-decarboxylase</fullName>
        <ecNumber evidence="1">4.1.1.11</ecNumber>
    </recommendedName>
    <alternativeName>
        <fullName evidence="1">Aspartate alpha-decarboxylase</fullName>
    </alternativeName>
    <component>
        <recommendedName>
            <fullName evidence="1">Aspartate 1-decarboxylase beta chain</fullName>
        </recommendedName>
    </component>
    <component>
        <recommendedName>
            <fullName evidence="1">Aspartate 1-decarboxylase alpha chain</fullName>
        </recommendedName>
    </component>
</protein>
<reference key="1">
    <citation type="journal article" date="2014" name="Stand. Genomic Sci.">
        <title>Complete genome sequence of Burkholderia phymatum STM815(T), a broad host range and efficient nitrogen-fixing symbiont of Mimosa species.</title>
        <authorList>
            <person name="Moulin L."/>
            <person name="Klonowska A."/>
            <person name="Caroline B."/>
            <person name="Booth K."/>
            <person name="Vriezen J.A."/>
            <person name="Melkonian R."/>
            <person name="James E.K."/>
            <person name="Young J.P."/>
            <person name="Bena G."/>
            <person name="Hauser L."/>
            <person name="Land M."/>
            <person name="Kyrpides N."/>
            <person name="Bruce D."/>
            <person name="Chain P."/>
            <person name="Copeland A."/>
            <person name="Pitluck S."/>
            <person name="Woyke T."/>
            <person name="Lizotte-Waniewski M."/>
            <person name="Bristow J."/>
            <person name="Riley M."/>
        </authorList>
    </citation>
    <scope>NUCLEOTIDE SEQUENCE [LARGE SCALE GENOMIC DNA]</scope>
    <source>
        <strain>DSM 17167 / CIP 108236 / LMG 21445 / STM815</strain>
    </source>
</reference>
<feature type="chain" id="PRO_1000191938" description="Aspartate 1-decarboxylase beta chain" evidence="1">
    <location>
        <begin position="1"/>
        <end position="24"/>
    </location>
</feature>
<feature type="chain" id="PRO_1000191939" description="Aspartate 1-decarboxylase alpha chain" evidence="1">
    <location>
        <begin position="25"/>
        <end position="128"/>
    </location>
</feature>
<feature type="active site" description="Schiff-base intermediate with substrate; via pyruvic acid" evidence="1">
    <location>
        <position position="25"/>
    </location>
</feature>
<feature type="active site" description="Proton donor" evidence="1">
    <location>
        <position position="58"/>
    </location>
</feature>
<feature type="binding site" evidence="1">
    <location>
        <position position="57"/>
    </location>
    <ligand>
        <name>substrate</name>
    </ligand>
</feature>
<feature type="binding site" evidence="1">
    <location>
        <begin position="73"/>
        <end position="75"/>
    </location>
    <ligand>
        <name>substrate</name>
    </ligand>
</feature>
<feature type="modified residue" description="Pyruvic acid (Ser)" evidence="1">
    <location>
        <position position="25"/>
    </location>
</feature>
<sequence length="128" mass="14295">MQRNMLKSKIHRAVVTHCELHYEGSCAIDENLLEAANIVENERIDIWNINNGERFSTYAIKGERGSGMISLNGSAARRAQLGDLVIIAAFANVDEEELKAGWKPDLVFVDDKNAIKGSRDHVPTQSWT</sequence>
<evidence type="ECO:0000255" key="1">
    <source>
        <dbReference type="HAMAP-Rule" id="MF_00446"/>
    </source>
</evidence>
<keyword id="KW-0068">Autocatalytic cleavage</keyword>
<keyword id="KW-0963">Cytoplasm</keyword>
<keyword id="KW-0210">Decarboxylase</keyword>
<keyword id="KW-0456">Lyase</keyword>
<keyword id="KW-0566">Pantothenate biosynthesis</keyword>
<keyword id="KW-0670">Pyruvate</keyword>
<keyword id="KW-1185">Reference proteome</keyword>
<keyword id="KW-0704">Schiff base</keyword>
<keyword id="KW-0865">Zymogen</keyword>
<dbReference type="EC" id="4.1.1.11" evidence="1"/>
<dbReference type="EMBL" id="CP001043">
    <property type="protein sequence ID" value="ACC71373.1"/>
    <property type="molecule type" value="Genomic_DNA"/>
</dbReference>
<dbReference type="RefSeq" id="WP_012401579.1">
    <property type="nucleotide sequence ID" value="NC_010622.1"/>
</dbReference>
<dbReference type="SMR" id="B2JEQ8"/>
<dbReference type="STRING" id="391038.Bphy_2198"/>
<dbReference type="KEGG" id="bph:Bphy_2198"/>
<dbReference type="eggNOG" id="COG0853">
    <property type="taxonomic scope" value="Bacteria"/>
</dbReference>
<dbReference type="HOGENOM" id="CLU_115305_2_0_4"/>
<dbReference type="OrthoDB" id="9803983at2"/>
<dbReference type="UniPathway" id="UPA00028">
    <property type="reaction ID" value="UER00002"/>
</dbReference>
<dbReference type="Proteomes" id="UP000001192">
    <property type="component" value="Chromosome 1"/>
</dbReference>
<dbReference type="GO" id="GO:0005829">
    <property type="term" value="C:cytosol"/>
    <property type="evidence" value="ECO:0007669"/>
    <property type="project" value="TreeGrafter"/>
</dbReference>
<dbReference type="GO" id="GO:0004068">
    <property type="term" value="F:aspartate 1-decarboxylase activity"/>
    <property type="evidence" value="ECO:0007669"/>
    <property type="project" value="UniProtKB-UniRule"/>
</dbReference>
<dbReference type="GO" id="GO:0006523">
    <property type="term" value="P:alanine biosynthetic process"/>
    <property type="evidence" value="ECO:0007669"/>
    <property type="project" value="InterPro"/>
</dbReference>
<dbReference type="GO" id="GO:0015940">
    <property type="term" value="P:pantothenate biosynthetic process"/>
    <property type="evidence" value="ECO:0007669"/>
    <property type="project" value="UniProtKB-UniRule"/>
</dbReference>
<dbReference type="CDD" id="cd06919">
    <property type="entry name" value="Asp_decarbox"/>
    <property type="match status" value="1"/>
</dbReference>
<dbReference type="Gene3D" id="2.40.40.20">
    <property type="match status" value="1"/>
</dbReference>
<dbReference type="HAMAP" id="MF_00446">
    <property type="entry name" value="PanD"/>
    <property type="match status" value="1"/>
</dbReference>
<dbReference type="InterPro" id="IPR009010">
    <property type="entry name" value="Asp_de-COase-like_dom_sf"/>
</dbReference>
<dbReference type="InterPro" id="IPR003190">
    <property type="entry name" value="Asp_decarbox"/>
</dbReference>
<dbReference type="NCBIfam" id="TIGR00223">
    <property type="entry name" value="panD"/>
    <property type="match status" value="1"/>
</dbReference>
<dbReference type="PANTHER" id="PTHR21012">
    <property type="entry name" value="ASPARTATE 1-DECARBOXYLASE"/>
    <property type="match status" value="1"/>
</dbReference>
<dbReference type="PANTHER" id="PTHR21012:SF0">
    <property type="entry name" value="ASPARTATE 1-DECARBOXYLASE"/>
    <property type="match status" value="1"/>
</dbReference>
<dbReference type="Pfam" id="PF02261">
    <property type="entry name" value="Asp_decarbox"/>
    <property type="match status" value="1"/>
</dbReference>
<dbReference type="PIRSF" id="PIRSF006246">
    <property type="entry name" value="Asp_decarbox"/>
    <property type="match status" value="1"/>
</dbReference>
<dbReference type="SUPFAM" id="SSF50692">
    <property type="entry name" value="ADC-like"/>
    <property type="match status" value="1"/>
</dbReference>
<accession>B2JEQ8</accession>
<name>PAND_PARP8</name>